<comment type="function">
    <text evidence="2 4">A DNA-binding protein implicated in transcriptional repression (PubMed:19521501) and chromosome organization and compaction. Modifies gene expression, regardless of whether the gene is chromosomal or was acquired by horizontal gene transfer (PubMed:19521501). Binds nucleation sites in AT-rich DNA and bridges them, forming higher-order nucleoprotein complexes and condensing the chromosome. As many horizontally transferred genes are AT-rich, it plays a central role in silencing foreign genes. A subset of genes are repressed by H-NS in association with Hha and/or Cnu (ydgT) (By similarity).</text>
</comment>
<comment type="subunit">
    <text evidence="2">Homodimer that oligomerizes on DNA into higher-order complexes that form bridges between disparate regions of DNA compacting it. Interacts with Hha, YdgT and StpA.</text>
</comment>
<comment type="subcellular location">
    <subcellularLocation>
        <location evidence="2">Cytoplasm</location>
        <location evidence="2">Nucleoid</location>
    </subcellularLocation>
</comment>
<comment type="disruption phenotype">
    <text evidence="4">Altered expression of a significant number of genes; expression of an R27-plasmid encoded hns (AC Q9L5H8) restores wild-type expression to only a subset of these genes.</text>
</comment>
<comment type="similarity">
    <text>Belongs to the histone-like protein H-NS family.</text>
</comment>
<organism>
    <name type="scientific">Salmonella typhimurium (strain SL1344)</name>
    <dbReference type="NCBI Taxonomy" id="216597"/>
    <lineage>
        <taxon>Bacteria</taxon>
        <taxon>Pseudomonadati</taxon>
        <taxon>Pseudomonadota</taxon>
        <taxon>Gammaproteobacteria</taxon>
        <taxon>Enterobacterales</taxon>
        <taxon>Enterobacteriaceae</taxon>
        <taxon>Salmonella</taxon>
    </lineage>
</organism>
<dbReference type="EMBL" id="FQ312003">
    <property type="protein sequence ID" value="CBW17777.1"/>
    <property type="molecule type" value="Genomic_DNA"/>
</dbReference>
<dbReference type="RefSeq" id="WP_001287383.1">
    <property type="nucleotide sequence ID" value="NZ_QASL01000001.1"/>
</dbReference>
<dbReference type="SMR" id="A0A0H3NBY9"/>
<dbReference type="GeneID" id="66756227"/>
<dbReference type="KEGG" id="sey:SL1344_1682"/>
<dbReference type="PATRIC" id="fig|216597.6.peg.1859"/>
<dbReference type="HOGENOM" id="CLU_117503_0_0_6"/>
<dbReference type="BioCyc" id="SENT216597:SL1344_RS08745-MONOMER"/>
<dbReference type="Proteomes" id="UP000008962">
    <property type="component" value="Chromosome"/>
</dbReference>
<dbReference type="GO" id="GO:0005829">
    <property type="term" value="C:cytosol"/>
    <property type="evidence" value="ECO:0007669"/>
    <property type="project" value="TreeGrafter"/>
</dbReference>
<dbReference type="GO" id="GO:0009295">
    <property type="term" value="C:nucleoid"/>
    <property type="evidence" value="ECO:0007669"/>
    <property type="project" value="UniProtKB-SubCell"/>
</dbReference>
<dbReference type="GO" id="GO:0032993">
    <property type="term" value="C:protein-DNA complex"/>
    <property type="evidence" value="ECO:0007669"/>
    <property type="project" value="TreeGrafter"/>
</dbReference>
<dbReference type="GO" id="GO:0003681">
    <property type="term" value="F:bent DNA binding"/>
    <property type="evidence" value="ECO:0007669"/>
    <property type="project" value="TreeGrafter"/>
</dbReference>
<dbReference type="GO" id="GO:0001217">
    <property type="term" value="F:DNA-binding transcription repressor activity"/>
    <property type="evidence" value="ECO:0007669"/>
    <property type="project" value="TreeGrafter"/>
</dbReference>
<dbReference type="GO" id="GO:0003680">
    <property type="term" value="F:minor groove of adenine-thymine-rich DNA binding"/>
    <property type="evidence" value="ECO:0007669"/>
    <property type="project" value="TreeGrafter"/>
</dbReference>
<dbReference type="GO" id="GO:0046983">
    <property type="term" value="F:protein dimerization activity"/>
    <property type="evidence" value="ECO:0007669"/>
    <property type="project" value="InterPro"/>
</dbReference>
<dbReference type="GO" id="GO:0030527">
    <property type="term" value="F:structural constituent of chromatin"/>
    <property type="evidence" value="ECO:0007669"/>
    <property type="project" value="InterPro"/>
</dbReference>
<dbReference type="GO" id="GO:0000976">
    <property type="term" value="F:transcription cis-regulatory region binding"/>
    <property type="evidence" value="ECO:0007669"/>
    <property type="project" value="TreeGrafter"/>
</dbReference>
<dbReference type="FunFam" id="1.10.287.1050:FF:000001">
    <property type="entry name" value="DNA-binding protein"/>
    <property type="match status" value="1"/>
</dbReference>
<dbReference type="FunFam" id="4.10.430.10:FF:000001">
    <property type="entry name" value="DNA-binding protein"/>
    <property type="match status" value="1"/>
</dbReference>
<dbReference type="Gene3D" id="1.10.287.1050">
    <property type="entry name" value="H-NS histone-like proteins"/>
    <property type="match status" value="1"/>
</dbReference>
<dbReference type="Gene3D" id="4.10.430.10">
    <property type="entry name" value="Histone-like protein H-NS, C-terminal domain"/>
    <property type="match status" value="1"/>
</dbReference>
<dbReference type="InterPro" id="IPR054180">
    <property type="entry name" value="H-NS-like_N"/>
</dbReference>
<dbReference type="InterPro" id="IPR027444">
    <property type="entry name" value="H-NS_C_dom"/>
</dbReference>
<dbReference type="InterPro" id="IPR037150">
    <property type="entry name" value="H-NS_C_dom_sf"/>
</dbReference>
<dbReference type="InterPro" id="IPR001801">
    <property type="entry name" value="Histone_HNS"/>
</dbReference>
<dbReference type="InterPro" id="IPR027454">
    <property type="entry name" value="Histone_HNS_N"/>
</dbReference>
<dbReference type="NCBIfam" id="NF008193">
    <property type="entry name" value="PRK10947.1"/>
    <property type="match status" value="1"/>
</dbReference>
<dbReference type="PANTHER" id="PTHR38097">
    <property type="match status" value="1"/>
</dbReference>
<dbReference type="PANTHER" id="PTHR38097:SF1">
    <property type="entry name" value="DNA-BINDING PROTEIN H-NS"/>
    <property type="match status" value="1"/>
</dbReference>
<dbReference type="Pfam" id="PF00816">
    <property type="entry name" value="Histone_HNS"/>
    <property type="match status" value="1"/>
</dbReference>
<dbReference type="Pfam" id="PF22470">
    <property type="entry name" value="Histone_HNS_N"/>
    <property type="match status" value="1"/>
</dbReference>
<dbReference type="PIRSF" id="PIRSF002096">
    <property type="entry name" value="HnS"/>
    <property type="match status" value="1"/>
</dbReference>
<dbReference type="SMART" id="SM00528">
    <property type="entry name" value="HNS"/>
    <property type="match status" value="1"/>
</dbReference>
<dbReference type="SUPFAM" id="SSF81273">
    <property type="entry name" value="H-NS histone-like proteins"/>
    <property type="match status" value="2"/>
</dbReference>
<gene>
    <name type="primary">hns</name>
    <name type="ordered locus">SL1344_1682</name>
</gene>
<protein>
    <recommendedName>
        <fullName>DNA-binding protein H-NS</fullName>
    </recommendedName>
</protein>
<evidence type="ECO:0000250" key="1">
    <source>
        <dbReference type="UniProtKB" id="P0A1S2"/>
    </source>
</evidence>
<evidence type="ECO:0000250" key="2">
    <source>
        <dbReference type="UniProtKB" id="P0ACF8"/>
    </source>
</evidence>
<evidence type="ECO:0000255" key="3"/>
<evidence type="ECO:0000269" key="4">
    <source>
    </source>
</evidence>
<proteinExistence type="evidence at protein level"/>
<sequence length="137" mass="15543">MSEALKILNNIRTLRAQARECTLETLEEMLEKLEVVVNERREEESAAAAEVEERTRKLQQYREMLIADGIDPNELLNSMAAAKSGTKAKRAARPAKYSYVDENGETKTWTGQGRTPAVIKKAMEEQGKQLEDFLIKE</sequence>
<name>HNS_SALTS</name>
<reference key="1">
    <citation type="journal article" date="2012" name="Proc. Natl. Acad. Sci. U.S.A.">
        <title>The transcriptional landscape and small RNAs of Salmonella enterica serovar Typhimurium.</title>
        <authorList>
            <person name="Kroger C."/>
            <person name="Dillon S.C."/>
            <person name="Cameron A.D."/>
            <person name="Papenfort K."/>
            <person name="Sivasankaran S.K."/>
            <person name="Hokamp K."/>
            <person name="Chao Y."/>
            <person name="Sittka A."/>
            <person name="Hebrard M."/>
            <person name="Handler K."/>
            <person name="Colgan A."/>
            <person name="Leekitcharoenphon P."/>
            <person name="Langridge G.C."/>
            <person name="Lohan A.J."/>
            <person name="Loftus B."/>
            <person name="Lucchini S."/>
            <person name="Ussery D.W."/>
            <person name="Dorman C.J."/>
            <person name="Thomson N.R."/>
            <person name="Vogel J."/>
            <person name="Hinton J.C."/>
        </authorList>
    </citation>
    <scope>NUCLEOTIDE SEQUENCE [LARGE SCALE GENOMIC DNA]</scope>
    <source>
        <strain>SL1344</strain>
    </source>
</reference>
<reference key="2">
    <citation type="journal article" date="2009" name="PLoS Genet.">
        <title>Differential regulation of horizontally acquired and core genome genes by the bacterial modulator H-NS.</title>
        <authorList>
            <person name="Banos R.C."/>
            <person name="Vivero A."/>
            <person name="Aznar S."/>
            <person name="Garcia J."/>
            <person name="Pons M."/>
            <person name="Madrid C."/>
            <person name="Juarez A."/>
        </authorList>
    </citation>
    <scope>FUNCTION</scope>
    <scope>DISRUPTION PHENOTYPE</scope>
    <scope>DNA-BINDING</scope>
    <source>
        <strain>SL1344 / SV5015</strain>
    </source>
</reference>
<feature type="chain" id="PRO_0000436894" description="DNA-binding protein H-NS">
    <location>
        <begin position="1"/>
        <end position="137"/>
    </location>
</feature>
<feature type="DNA-binding region" evidence="1">
    <location>
        <begin position="112"/>
        <end position="117"/>
    </location>
</feature>
<feature type="coiled-coil region" evidence="3">
    <location>
        <begin position="13"/>
        <end position="65"/>
    </location>
</feature>
<keyword id="KW-0175">Coiled coil</keyword>
<keyword id="KW-0963">Cytoplasm</keyword>
<keyword id="KW-0238">DNA-binding</keyword>
<keyword id="KW-0804">Transcription</keyword>
<keyword id="KW-0805">Transcription regulation</keyword>
<accession>A0A0H3NBY9</accession>